<keyword id="KW-0274">FAD</keyword>
<keyword id="KW-0285">Flavoprotein</keyword>
<keyword id="KW-0560">Oxidoreductase</keyword>
<keyword id="KW-1185">Reference proteome</keyword>
<accession>P52042</accession>
<name>ACDS_CLOAB</name>
<gene>
    <name type="primary">bcd</name>
    <name type="ordered locus">CA_C2711</name>
</gene>
<protein>
    <recommendedName>
        <fullName>Acyl-CoA dehydrogenase, short-chain specific</fullName>
        <ecNumber>1.3.8.1</ecNumber>
    </recommendedName>
    <alternativeName>
        <fullName>Butyryl-CoA dehydrogenase</fullName>
    </alternativeName>
    <alternativeName>
        <fullName>SCAD</fullName>
    </alternativeName>
</protein>
<organism>
    <name type="scientific">Clostridium acetobutylicum (strain ATCC 824 / DSM 792 / JCM 1419 / IAM 19013 / LMG 5710 / NBRC 13948 / NRRL B-527 / VKM B-1787 / 2291 / W)</name>
    <dbReference type="NCBI Taxonomy" id="272562"/>
    <lineage>
        <taxon>Bacteria</taxon>
        <taxon>Bacillati</taxon>
        <taxon>Bacillota</taxon>
        <taxon>Clostridia</taxon>
        <taxon>Eubacteriales</taxon>
        <taxon>Clostridiaceae</taxon>
        <taxon>Clostridium</taxon>
    </lineage>
</organism>
<reference key="1">
    <citation type="journal article" date="1996" name="J. Bacteriol.">
        <title>Cloning, sequencing, and expression of clustered genes encoding beta-hydroxybutyryl-coenzyme A (CoA) dehydrogenase, crotonase, and butyryl-CoA dehydrogenase from Clostridium acetobutylicum ATCC 824.</title>
        <authorList>
            <person name="Boynton Z.L."/>
            <person name="Bennett G.N."/>
            <person name="Rudolph F.B."/>
        </authorList>
    </citation>
    <scope>NUCLEOTIDE SEQUENCE [GENOMIC DNA]</scope>
    <scope>CATALYTIC ACTIVITY</scope>
    <source>
        <strain>ATCC 824 / DSM 792 / JCM 1419 / IAM 19013 / LMG 5710 / NBRC 13948 / NRRL B-527 / VKM B-1787 / 2291 / W</strain>
    </source>
</reference>
<reference key="2">
    <citation type="journal article" date="2001" name="J. Bacteriol.">
        <title>Genome sequence and comparative analysis of the solvent-producing bacterium Clostridium acetobutylicum.</title>
        <authorList>
            <person name="Noelling J."/>
            <person name="Breton G."/>
            <person name="Omelchenko M.V."/>
            <person name="Makarova K.S."/>
            <person name="Zeng Q."/>
            <person name="Gibson R."/>
            <person name="Lee H.M."/>
            <person name="Dubois J."/>
            <person name="Qiu D."/>
            <person name="Hitti J."/>
            <person name="Wolf Y.I."/>
            <person name="Tatusov R.L."/>
            <person name="Sabathe F."/>
            <person name="Doucette-Stamm L.A."/>
            <person name="Soucaille P."/>
            <person name="Daly M.J."/>
            <person name="Bennett G.N."/>
            <person name="Koonin E.V."/>
            <person name="Smith D.R."/>
        </authorList>
    </citation>
    <scope>NUCLEOTIDE SEQUENCE [LARGE SCALE GENOMIC DNA]</scope>
    <source>
        <strain>ATCC 824 / DSM 792 / JCM 1419 / IAM 19013 / LMG 5710 / NBRC 13948 / NRRL B-527 / VKM B-1787 / 2291 / W</strain>
    </source>
</reference>
<proteinExistence type="evidence at protein level"/>
<comment type="catalytic activity">
    <reaction evidence="1">
        <text>butanoyl-CoA + oxidized [electron-transfer flavoprotein] + H(+) = (2E)-butenoyl-CoA + reduced [electron-transfer flavoprotein]</text>
        <dbReference type="Rhea" id="RHEA:24004"/>
        <dbReference type="Rhea" id="RHEA-COMP:10685"/>
        <dbReference type="Rhea" id="RHEA-COMP:10686"/>
        <dbReference type="ChEBI" id="CHEBI:15378"/>
        <dbReference type="ChEBI" id="CHEBI:57332"/>
        <dbReference type="ChEBI" id="CHEBI:57371"/>
        <dbReference type="ChEBI" id="CHEBI:57692"/>
        <dbReference type="ChEBI" id="CHEBI:58307"/>
        <dbReference type="EC" id="1.3.8.1"/>
    </reaction>
</comment>
<comment type="catalytic activity">
    <reaction evidence="1">
        <text>a short-chain 2,3-saturated fatty acyl-CoA + oxidized [electron-transfer flavoprotein] + H(+) = a short-chain (2E)-enoyl-CoA + reduced [electron-transfer flavoprotein]</text>
        <dbReference type="Rhea" id="RHEA:47196"/>
        <dbReference type="Rhea" id="RHEA-COMP:10685"/>
        <dbReference type="Rhea" id="RHEA-COMP:10686"/>
        <dbReference type="ChEBI" id="CHEBI:15378"/>
        <dbReference type="ChEBI" id="CHEBI:57692"/>
        <dbReference type="ChEBI" id="CHEBI:58307"/>
        <dbReference type="ChEBI" id="CHEBI:87487"/>
        <dbReference type="ChEBI" id="CHEBI:87488"/>
        <dbReference type="EC" id="1.3.8.1"/>
    </reaction>
</comment>
<comment type="cofactor">
    <cofactor>
        <name>FAD</name>
        <dbReference type="ChEBI" id="CHEBI:57692"/>
    </cofactor>
</comment>
<comment type="pathway">
    <text>Lipid metabolism; butanoate metabolism.</text>
</comment>
<comment type="similarity">
    <text evidence="2">Belongs to the acyl-CoA dehydrogenase family.</text>
</comment>
<dbReference type="EC" id="1.3.8.1"/>
<dbReference type="EMBL" id="U17110">
    <property type="protein sequence ID" value="AAA95968.1"/>
    <property type="molecule type" value="Genomic_DNA"/>
</dbReference>
<dbReference type="EMBL" id="AE001437">
    <property type="protein sequence ID" value="AAK80657.1"/>
    <property type="molecule type" value="Genomic_DNA"/>
</dbReference>
<dbReference type="PIR" id="F97233">
    <property type="entry name" value="F97233"/>
</dbReference>
<dbReference type="PIR" id="T47262">
    <property type="entry name" value="T47262"/>
</dbReference>
<dbReference type="RefSeq" id="NP_349317.1">
    <property type="nucleotide sequence ID" value="NC_003030.1"/>
</dbReference>
<dbReference type="RefSeq" id="WP_010965998.1">
    <property type="nucleotide sequence ID" value="NC_003030.1"/>
</dbReference>
<dbReference type="SMR" id="P52042"/>
<dbReference type="STRING" id="272562.CA_C2711"/>
<dbReference type="KEGG" id="cac:CA_C2711"/>
<dbReference type="PATRIC" id="fig|272562.8.peg.2901"/>
<dbReference type="eggNOG" id="COG1960">
    <property type="taxonomic scope" value="Bacteria"/>
</dbReference>
<dbReference type="HOGENOM" id="CLU_018204_0_2_9"/>
<dbReference type="OrthoDB" id="9802447at2"/>
<dbReference type="BioCyc" id="MetaCyc:BCDCLOS-MONOMER"/>
<dbReference type="UniPathway" id="UPA00863"/>
<dbReference type="Proteomes" id="UP000000814">
    <property type="component" value="Chromosome"/>
</dbReference>
<dbReference type="GO" id="GO:0050660">
    <property type="term" value="F:flavin adenine dinucleotide binding"/>
    <property type="evidence" value="ECO:0007669"/>
    <property type="project" value="InterPro"/>
</dbReference>
<dbReference type="GO" id="GO:0016937">
    <property type="term" value="F:short-chain fatty acyl-CoA dehydrogenase activity"/>
    <property type="evidence" value="ECO:0007669"/>
    <property type="project" value="UniProtKB-EC"/>
</dbReference>
<dbReference type="GO" id="GO:0019605">
    <property type="term" value="P:butyrate metabolic process"/>
    <property type="evidence" value="ECO:0007669"/>
    <property type="project" value="UniProtKB-UniPathway"/>
</dbReference>
<dbReference type="CDD" id="cd01158">
    <property type="entry name" value="SCAD_SBCAD"/>
    <property type="match status" value="1"/>
</dbReference>
<dbReference type="FunFam" id="1.10.540.10:FF:000002">
    <property type="entry name" value="Acyl-CoA dehydrogenase FadE19"/>
    <property type="match status" value="1"/>
</dbReference>
<dbReference type="FunFam" id="1.20.140.10:FF:000004">
    <property type="entry name" value="Acyl-CoA dehydrogenase FadE25"/>
    <property type="match status" value="1"/>
</dbReference>
<dbReference type="FunFam" id="2.40.110.10:FF:000001">
    <property type="entry name" value="Acyl-CoA dehydrogenase, mitochondrial"/>
    <property type="match status" value="1"/>
</dbReference>
<dbReference type="Gene3D" id="1.10.540.10">
    <property type="entry name" value="Acyl-CoA dehydrogenase/oxidase, N-terminal domain"/>
    <property type="match status" value="1"/>
</dbReference>
<dbReference type="Gene3D" id="2.40.110.10">
    <property type="entry name" value="Butyryl-CoA Dehydrogenase, subunit A, domain 2"/>
    <property type="match status" value="1"/>
</dbReference>
<dbReference type="Gene3D" id="1.20.140.10">
    <property type="entry name" value="Butyryl-CoA Dehydrogenase, subunit A, domain 3"/>
    <property type="match status" value="1"/>
</dbReference>
<dbReference type="InterPro" id="IPR006089">
    <property type="entry name" value="Acyl-CoA_DH_CS"/>
</dbReference>
<dbReference type="InterPro" id="IPR006091">
    <property type="entry name" value="Acyl-CoA_Oxase/DH_mid-dom"/>
</dbReference>
<dbReference type="InterPro" id="IPR046373">
    <property type="entry name" value="Acyl-CoA_Oxase/DH_mid-dom_sf"/>
</dbReference>
<dbReference type="InterPro" id="IPR036250">
    <property type="entry name" value="AcylCo_DH-like_C"/>
</dbReference>
<dbReference type="InterPro" id="IPR009075">
    <property type="entry name" value="AcylCo_DH/oxidase_C"/>
</dbReference>
<dbReference type="InterPro" id="IPR013786">
    <property type="entry name" value="AcylCoA_DH/ox_N"/>
</dbReference>
<dbReference type="InterPro" id="IPR037069">
    <property type="entry name" value="AcylCoA_DH/ox_N_sf"/>
</dbReference>
<dbReference type="InterPro" id="IPR009100">
    <property type="entry name" value="AcylCoA_DH/oxidase_NM_dom_sf"/>
</dbReference>
<dbReference type="PANTHER" id="PTHR43884">
    <property type="entry name" value="ACYL-COA DEHYDROGENASE"/>
    <property type="match status" value="1"/>
</dbReference>
<dbReference type="PANTHER" id="PTHR43884:SF12">
    <property type="entry name" value="ISOVALERYL-COA DEHYDROGENASE, MITOCHONDRIAL-RELATED"/>
    <property type="match status" value="1"/>
</dbReference>
<dbReference type="Pfam" id="PF00441">
    <property type="entry name" value="Acyl-CoA_dh_1"/>
    <property type="match status" value="1"/>
</dbReference>
<dbReference type="Pfam" id="PF02770">
    <property type="entry name" value="Acyl-CoA_dh_M"/>
    <property type="match status" value="1"/>
</dbReference>
<dbReference type="Pfam" id="PF02771">
    <property type="entry name" value="Acyl-CoA_dh_N"/>
    <property type="match status" value="1"/>
</dbReference>
<dbReference type="PIRSF" id="PIRSF016578">
    <property type="entry name" value="HsaA"/>
    <property type="match status" value="1"/>
</dbReference>
<dbReference type="SUPFAM" id="SSF47203">
    <property type="entry name" value="Acyl-CoA dehydrogenase C-terminal domain-like"/>
    <property type="match status" value="1"/>
</dbReference>
<dbReference type="SUPFAM" id="SSF56645">
    <property type="entry name" value="Acyl-CoA dehydrogenase NM domain-like"/>
    <property type="match status" value="1"/>
</dbReference>
<dbReference type="PROSITE" id="PS00072">
    <property type="entry name" value="ACYL_COA_DH_1"/>
    <property type="match status" value="1"/>
</dbReference>
<dbReference type="PROSITE" id="PS00073">
    <property type="entry name" value="ACYL_COA_DH_2"/>
    <property type="match status" value="1"/>
</dbReference>
<evidence type="ECO:0000269" key="1">
    <source>
    </source>
</evidence>
<evidence type="ECO:0000305" key="2"/>
<sequence length="379" mass="41387">MDFNLTREQELVRQMVREFAENEVKPIAAEIDETERFPMENVKKMGQYGMMGIPFSKEYGGAGGDVLSYIIAVEELSKVCGTTGVILSAHTSLCASLINEHGTEEQKQKYLVPLAKGEKIGAYGLTEPNAGTDSGAQQTVAVLEGDHYVINGSKIFITNGGVADTFVIFAMTDRTKGTKGISAFIIEKGFKGFSIGKVEQKLGIRASSTTELVFEDMIVPVENMIGKEGKGFPIAMKTLDGGRIGIAAQALGIAEGAFNEARAYMKERKQFGRSLDKFQGLAWMMADMDVAIESARYLVYKAAYLKQAGLPYTVDAARAKLHAANVAMDVTTKAVQLFGGYGYTKDYPVERMMRDAKITEIYEGTSEVQKLVISGKIFR</sequence>
<feature type="chain" id="PRO_0000201189" description="Acyl-CoA dehydrogenase, short-chain specific">
    <location>
        <begin position="1"/>
        <end position="379"/>
    </location>
</feature>